<dbReference type="EC" id="1.1.1.94" evidence="1"/>
<dbReference type="EMBL" id="BA000036">
    <property type="protein sequence ID" value="BAB98713.1"/>
    <property type="molecule type" value="Genomic_DNA"/>
</dbReference>
<dbReference type="EMBL" id="BX927151">
    <property type="protein sequence ID" value="CAF20018.1"/>
    <property type="molecule type" value="Genomic_DNA"/>
</dbReference>
<dbReference type="RefSeq" id="NP_600540.1">
    <property type="nucleotide sequence ID" value="NC_003450.3"/>
</dbReference>
<dbReference type="RefSeq" id="WP_003858849.1">
    <property type="nucleotide sequence ID" value="NC_006958.1"/>
</dbReference>
<dbReference type="SMR" id="Q8NQV3"/>
<dbReference type="STRING" id="196627.cg1492"/>
<dbReference type="KEGG" id="cgb:cg1492"/>
<dbReference type="KEGG" id="cgl:Cgl1320"/>
<dbReference type="PATRIC" id="fig|196627.13.peg.1290"/>
<dbReference type="eggNOG" id="COG0240">
    <property type="taxonomic scope" value="Bacteria"/>
</dbReference>
<dbReference type="HOGENOM" id="CLU_033449_0_2_11"/>
<dbReference type="OrthoDB" id="9812273at2"/>
<dbReference type="BioCyc" id="CORYNE:G18NG-10898-MONOMER"/>
<dbReference type="UniPathway" id="UPA00940"/>
<dbReference type="Proteomes" id="UP000000582">
    <property type="component" value="Chromosome"/>
</dbReference>
<dbReference type="Proteomes" id="UP000001009">
    <property type="component" value="Chromosome"/>
</dbReference>
<dbReference type="GO" id="GO:0005829">
    <property type="term" value="C:cytosol"/>
    <property type="evidence" value="ECO:0007669"/>
    <property type="project" value="TreeGrafter"/>
</dbReference>
<dbReference type="GO" id="GO:0047952">
    <property type="term" value="F:glycerol-3-phosphate dehydrogenase [NAD(P)+] activity"/>
    <property type="evidence" value="ECO:0007669"/>
    <property type="project" value="UniProtKB-UniRule"/>
</dbReference>
<dbReference type="GO" id="GO:0051287">
    <property type="term" value="F:NAD binding"/>
    <property type="evidence" value="ECO:0007669"/>
    <property type="project" value="InterPro"/>
</dbReference>
<dbReference type="GO" id="GO:0005975">
    <property type="term" value="P:carbohydrate metabolic process"/>
    <property type="evidence" value="ECO:0007669"/>
    <property type="project" value="InterPro"/>
</dbReference>
<dbReference type="GO" id="GO:0046167">
    <property type="term" value="P:glycerol-3-phosphate biosynthetic process"/>
    <property type="evidence" value="ECO:0007669"/>
    <property type="project" value="UniProtKB-UniRule"/>
</dbReference>
<dbReference type="GO" id="GO:0046168">
    <property type="term" value="P:glycerol-3-phosphate catabolic process"/>
    <property type="evidence" value="ECO:0007669"/>
    <property type="project" value="InterPro"/>
</dbReference>
<dbReference type="GO" id="GO:0006650">
    <property type="term" value="P:glycerophospholipid metabolic process"/>
    <property type="evidence" value="ECO:0007669"/>
    <property type="project" value="UniProtKB-UniRule"/>
</dbReference>
<dbReference type="GO" id="GO:0008654">
    <property type="term" value="P:phospholipid biosynthetic process"/>
    <property type="evidence" value="ECO:0007669"/>
    <property type="project" value="UniProtKB-KW"/>
</dbReference>
<dbReference type="FunFam" id="1.10.1040.10:FF:000001">
    <property type="entry name" value="Glycerol-3-phosphate dehydrogenase [NAD(P)+]"/>
    <property type="match status" value="1"/>
</dbReference>
<dbReference type="FunFam" id="3.40.50.720:FF:000019">
    <property type="entry name" value="Glycerol-3-phosphate dehydrogenase [NAD(P)+]"/>
    <property type="match status" value="1"/>
</dbReference>
<dbReference type="Gene3D" id="1.10.1040.10">
    <property type="entry name" value="N-(1-d-carboxylethyl)-l-norvaline Dehydrogenase, domain 2"/>
    <property type="match status" value="1"/>
</dbReference>
<dbReference type="Gene3D" id="3.40.50.720">
    <property type="entry name" value="NAD(P)-binding Rossmann-like Domain"/>
    <property type="match status" value="1"/>
</dbReference>
<dbReference type="HAMAP" id="MF_00394">
    <property type="entry name" value="NAD_Glyc3P_dehydrog"/>
    <property type="match status" value="1"/>
</dbReference>
<dbReference type="InterPro" id="IPR008927">
    <property type="entry name" value="6-PGluconate_DH-like_C_sf"/>
</dbReference>
<dbReference type="InterPro" id="IPR013328">
    <property type="entry name" value="6PGD_dom2"/>
</dbReference>
<dbReference type="InterPro" id="IPR006168">
    <property type="entry name" value="G3P_DH_NAD-dep"/>
</dbReference>
<dbReference type="InterPro" id="IPR006109">
    <property type="entry name" value="G3P_DH_NAD-dep_C"/>
</dbReference>
<dbReference type="InterPro" id="IPR011128">
    <property type="entry name" value="G3P_DH_NAD-dep_N"/>
</dbReference>
<dbReference type="InterPro" id="IPR036291">
    <property type="entry name" value="NAD(P)-bd_dom_sf"/>
</dbReference>
<dbReference type="NCBIfam" id="NF000940">
    <property type="entry name" value="PRK00094.1-2"/>
    <property type="match status" value="1"/>
</dbReference>
<dbReference type="NCBIfam" id="NF000942">
    <property type="entry name" value="PRK00094.1-4"/>
    <property type="match status" value="1"/>
</dbReference>
<dbReference type="PANTHER" id="PTHR11728">
    <property type="entry name" value="GLYCEROL-3-PHOSPHATE DEHYDROGENASE"/>
    <property type="match status" value="1"/>
</dbReference>
<dbReference type="PANTHER" id="PTHR11728:SF1">
    <property type="entry name" value="GLYCEROL-3-PHOSPHATE DEHYDROGENASE [NAD(+)] 2, CHLOROPLASTIC"/>
    <property type="match status" value="1"/>
</dbReference>
<dbReference type="Pfam" id="PF07479">
    <property type="entry name" value="NAD_Gly3P_dh_C"/>
    <property type="match status" value="1"/>
</dbReference>
<dbReference type="Pfam" id="PF01210">
    <property type="entry name" value="NAD_Gly3P_dh_N"/>
    <property type="match status" value="1"/>
</dbReference>
<dbReference type="PIRSF" id="PIRSF000114">
    <property type="entry name" value="Glycerol-3-P_dh"/>
    <property type="match status" value="1"/>
</dbReference>
<dbReference type="PRINTS" id="PR00077">
    <property type="entry name" value="GPDHDRGNASE"/>
</dbReference>
<dbReference type="SUPFAM" id="SSF48179">
    <property type="entry name" value="6-phosphogluconate dehydrogenase C-terminal domain-like"/>
    <property type="match status" value="1"/>
</dbReference>
<dbReference type="SUPFAM" id="SSF51735">
    <property type="entry name" value="NAD(P)-binding Rossmann-fold domains"/>
    <property type="match status" value="1"/>
</dbReference>
<dbReference type="PROSITE" id="PS00957">
    <property type="entry name" value="NAD_G3PDH"/>
    <property type="match status" value="1"/>
</dbReference>
<organism>
    <name type="scientific">Corynebacterium glutamicum (strain ATCC 13032 / DSM 20300 / JCM 1318 / BCRC 11384 / CCUG 27702 / LMG 3730 / NBRC 12168 / NCIMB 10025 / NRRL B-2784 / 534)</name>
    <dbReference type="NCBI Taxonomy" id="196627"/>
    <lineage>
        <taxon>Bacteria</taxon>
        <taxon>Bacillati</taxon>
        <taxon>Actinomycetota</taxon>
        <taxon>Actinomycetes</taxon>
        <taxon>Mycobacteriales</taxon>
        <taxon>Corynebacteriaceae</taxon>
        <taxon>Corynebacterium</taxon>
    </lineage>
</organism>
<evidence type="ECO:0000255" key="1">
    <source>
        <dbReference type="HAMAP-Rule" id="MF_00394"/>
    </source>
</evidence>
<comment type="function">
    <text evidence="1">Catalyzes the reduction of the glycolytic intermediate dihydroxyacetone phosphate (DHAP) to sn-glycerol 3-phosphate (G3P), the key precursor for phospholipid synthesis.</text>
</comment>
<comment type="catalytic activity">
    <reaction evidence="1">
        <text>sn-glycerol 3-phosphate + NAD(+) = dihydroxyacetone phosphate + NADH + H(+)</text>
        <dbReference type="Rhea" id="RHEA:11092"/>
        <dbReference type="ChEBI" id="CHEBI:15378"/>
        <dbReference type="ChEBI" id="CHEBI:57540"/>
        <dbReference type="ChEBI" id="CHEBI:57597"/>
        <dbReference type="ChEBI" id="CHEBI:57642"/>
        <dbReference type="ChEBI" id="CHEBI:57945"/>
        <dbReference type="EC" id="1.1.1.94"/>
    </reaction>
    <physiologicalReaction direction="right-to-left" evidence="1">
        <dbReference type="Rhea" id="RHEA:11094"/>
    </physiologicalReaction>
</comment>
<comment type="catalytic activity">
    <reaction evidence="1">
        <text>sn-glycerol 3-phosphate + NADP(+) = dihydroxyacetone phosphate + NADPH + H(+)</text>
        <dbReference type="Rhea" id="RHEA:11096"/>
        <dbReference type="ChEBI" id="CHEBI:15378"/>
        <dbReference type="ChEBI" id="CHEBI:57597"/>
        <dbReference type="ChEBI" id="CHEBI:57642"/>
        <dbReference type="ChEBI" id="CHEBI:57783"/>
        <dbReference type="ChEBI" id="CHEBI:58349"/>
        <dbReference type="EC" id="1.1.1.94"/>
    </reaction>
    <physiologicalReaction direction="right-to-left" evidence="1">
        <dbReference type="Rhea" id="RHEA:11098"/>
    </physiologicalReaction>
</comment>
<comment type="pathway">
    <text evidence="1">Membrane lipid metabolism; glycerophospholipid metabolism.</text>
</comment>
<comment type="subcellular location">
    <subcellularLocation>
        <location evidence="1">Cytoplasm</location>
    </subcellularLocation>
</comment>
<comment type="similarity">
    <text evidence="1">Belongs to the NAD-dependent glycerol-3-phosphate dehydrogenase family.</text>
</comment>
<accession>Q8NQV3</accession>
<sequence>MVSVSVMGAGSWGTTLAKVFSDAGNAVTLWARREELASTIRDSHENRDYLPGITLPESLQVTSSATEALEGAAIVVLAIPSQALRGNLAEWKETIPQDATLVSLAKGIEKGTHLRMSEVIAEVTEADPSRIAVLSGPNLAREIAEGQPAATVIACPDENRAKLVQAAVAAPYFRPYTNTDVVGTEIGGACKNVIALACGISHGYGLGENTNASLITRGLAEIARLGATLGADAKTFSGLAGMGDLVATCSSPLSRNRSFGERLGQGESLEKAREATNGQVAEGVISSQSIFDLATKLGVEMPITQAVYGVCHRDMKVTDMIVALMGRSKKAE</sequence>
<gene>
    <name evidence="1" type="primary">gpsA</name>
    <name type="ordered locus">Cgl1320</name>
    <name type="ordered locus">cg1492</name>
</gene>
<reference key="1">
    <citation type="journal article" date="2003" name="Appl. Microbiol. Biotechnol.">
        <title>The Corynebacterium glutamicum genome: features and impacts on biotechnological processes.</title>
        <authorList>
            <person name="Ikeda M."/>
            <person name="Nakagawa S."/>
        </authorList>
    </citation>
    <scope>NUCLEOTIDE SEQUENCE [LARGE SCALE GENOMIC DNA]</scope>
    <source>
        <strain>ATCC 13032 / DSM 20300 / JCM 1318 / BCRC 11384 / CCUG 27702 / LMG 3730 / NBRC 12168 / NCIMB 10025 / NRRL B-2784 / 534</strain>
    </source>
</reference>
<reference key="2">
    <citation type="journal article" date="2003" name="J. Biotechnol.">
        <title>The complete Corynebacterium glutamicum ATCC 13032 genome sequence and its impact on the production of L-aspartate-derived amino acids and vitamins.</title>
        <authorList>
            <person name="Kalinowski J."/>
            <person name="Bathe B."/>
            <person name="Bartels D."/>
            <person name="Bischoff N."/>
            <person name="Bott M."/>
            <person name="Burkovski A."/>
            <person name="Dusch N."/>
            <person name="Eggeling L."/>
            <person name="Eikmanns B.J."/>
            <person name="Gaigalat L."/>
            <person name="Goesmann A."/>
            <person name="Hartmann M."/>
            <person name="Huthmacher K."/>
            <person name="Kraemer R."/>
            <person name="Linke B."/>
            <person name="McHardy A.C."/>
            <person name="Meyer F."/>
            <person name="Moeckel B."/>
            <person name="Pfefferle W."/>
            <person name="Puehler A."/>
            <person name="Rey D.A."/>
            <person name="Rueckert C."/>
            <person name="Rupp O."/>
            <person name="Sahm H."/>
            <person name="Wendisch V.F."/>
            <person name="Wiegraebe I."/>
            <person name="Tauch A."/>
        </authorList>
    </citation>
    <scope>NUCLEOTIDE SEQUENCE [LARGE SCALE GENOMIC DNA]</scope>
    <source>
        <strain>ATCC 13032 / DSM 20300 / JCM 1318 / BCRC 11384 / CCUG 27702 / LMG 3730 / NBRC 12168 / NCIMB 10025 / NRRL B-2784 / 534</strain>
    </source>
</reference>
<name>GPDA_CORGL</name>
<proteinExistence type="inferred from homology"/>
<feature type="chain" id="PRO_0000137952" description="Glycerol-3-phosphate dehydrogenase [NAD(P)+]">
    <location>
        <begin position="1"/>
        <end position="332"/>
    </location>
</feature>
<feature type="active site" description="Proton acceptor" evidence="1">
    <location>
        <position position="191"/>
    </location>
</feature>
<feature type="binding site" evidence="1">
    <location>
        <position position="11"/>
    </location>
    <ligand>
        <name>NADPH</name>
        <dbReference type="ChEBI" id="CHEBI:57783"/>
    </ligand>
</feature>
<feature type="binding site" evidence="1">
    <location>
        <position position="12"/>
    </location>
    <ligand>
        <name>NADPH</name>
        <dbReference type="ChEBI" id="CHEBI:57783"/>
    </ligand>
</feature>
<feature type="binding site" evidence="1">
    <location>
        <position position="32"/>
    </location>
    <ligand>
        <name>NADPH</name>
        <dbReference type="ChEBI" id="CHEBI:57783"/>
    </ligand>
</feature>
<feature type="binding site" evidence="1">
    <location>
        <position position="33"/>
    </location>
    <ligand>
        <name>NADPH</name>
        <dbReference type="ChEBI" id="CHEBI:57783"/>
    </ligand>
</feature>
<feature type="binding site" evidence="1">
    <location>
        <position position="106"/>
    </location>
    <ligand>
        <name>NADPH</name>
        <dbReference type="ChEBI" id="CHEBI:57783"/>
    </ligand>
</feature>
<feature type="binding site" evidence="1">
    <location>
        <position position="106"/>
    </location>
    <ligand>
        <name>sn-glycerol 3-phosphate</name>
        <dbReference type="ChEBI" id="CHEBI:57597"/>
    </ligand>
</feature>
<feature type="binding site" evidence="1">
    <location>
        <position position="136"/>
    </location>
    <ligand>
        <name>sn-glycerol 3-phosphate</name>
        <dbReference type="ChEBI" id="CHEBI:57597"/>
    </ligand>
</feature>
<feature type="binding site" evidence="1">
    <location>
        <position position="140"/>
    </location>
    <ligand>
        <name>NADPH</name>
        <dbReference type="ChEBI" id="CHEBI:57783"/>
    </ligand>
</feature>
<feature type="binding site" evidence="1">
    <location>
        <position position="191"/>
    </location>
    <ligand>
        <name>sn-glycerol 3-phosphate</name>
        <dbReference type="ChEBI" id="CHEBI:57597"/>
    </ligand>
</feature>
<feature type="binding site" evidence="1">
    <location>
        <position position="244"/>
    </location>
    <ligand>
        <name>sn-glycerol 3-phosphate</name>
        <dbReference type="ChEBI" id="CHEBI:57597"/>
    </ligand>
</feature>
<feature type="binding site" evidence="1">
    <location>
        <position position="254"/>
    </location>
    <ligand>
        <name>sn-glycerol 3-phosphate</name>
        <dbReference type="ChEBI" id="CHEBI:57597"/>
    </ligand>
</feature>
<feature type="binding site" evidence="1">
    <location>
        <position position="255"/>
    </location>
    <ligand>
        <name>NADPH</name>
        <dbReference type="ChEBI" id="CHEBI:57783"/>
    </ligand>
</feature>
<feature type="binding site" evidence="1">
    <location>
        <position position="255"/>
    </location>
    <ligand>
        <name>sn-glycerol 3-phosphate</name>
        <dbReference type="ChEBI" id="CHEBI:57597"/>
    </ligand>
</feature>
<feature type="binding site" evidence="1">
    <location>
        <position position="256"/>
    </location>
    <ligand>
        <name>sn-glycerol 3-phosphate</name>
        <dbReference type="ChEBI" id="CHEBI:57597"/>
    </ligand>
</feature>
<feature type="binding site" evidence="1">
    <location>
        <position position="280"/>
    </location>
    <ligand>
        <name>NADPH</name>
        <dbReference type="ChEBI" id="CHEBI:57783"/>
    </ligand>
</feature>
<feature type="binding site" evidence="1">
    <location>
        <position position="282"/>
    </location>
    <ligand>
        <name>NADPH</name>
        <dbReference type="ChEBI" id="CHEBI:57783"/>
    </ligand>
</feature>
<protein>
    <recommendedName>
        <fullName evidence="1">Glycerol-3-phosphate dehydrogenase [NAD(P)+]</fullName>
        <ecNumber evidence="1">1.1.1.94</ecNumber>
    </recommendedName>
    <alternativeName>
        <fullName evidence="1">NAD(P)(+)-dependent glycerol-3-phosphate dehydrogenase</fullName>
    </alternativeName>
    <alternativeName>
        <fullName evidence="1">NAD(P)H-dependent dihydroxyacetone-phosphate reductase</fullName>
    </alternativeName>
</protein>
<keyword id="KW-0963">Cytoplasm</keyword>
<keyword id="KW-0444">Lipid biosynthesis</keyword>
<keyword id="KW-0443">Lipid metabolism</keyword>
<keyword id="KW-0520">NAD</keyword>
<keyword id="KW-0521">NADP</keyword>
<keyword id="KW-0547">Nucleotide-binding</keyword>
<keyword id="KW-0560">Oxidoreductase</keyword>
<keyword id="KW-0594">Phospholipid biosynthesis</keyword>
<keyword id="KW-1208">Phospholipid metabolism</keyword>
<keyword id="KW-1185">Reference proteome</keyword>